<keyword id="KW-0646">Protease inhibitor</keyword>
<keyword id="KW-1185">Reference proteome</keyword>
<keyword id="KW-0964">Secreted</keyword>
<keyword id="KW-0722">Serine protease inhibitor</keyword>
<keyword id="KW-0732">Signal</keyword>
<feature type="signal peptide" evidence="2">
    <location>
        <begin position="1"/>
        <end position="22"/>
    </location>
</feature>
<feature type="propeptide" id="PRO_0000025306" evidence="2">
    <location>
        <begin position="23"/>
        <end position="39"/>
    </location>
</feature>
<feature type="chain" id="PRO_0000025307" description="Proteinase inhibitor I-B">
    <location>
        <begin position="40"/>
        <end position="107"/>
    </location>
</feature>
<feature type="site" description="Reactive bond" evidence="1">
    <location>
        <begin position="83"/>
        <end position="84"/>
    </location>
</feature>
<accession>Q03199</accession>
<dbReference type="EMBL" id="Z12623">
    <property type="protein sequence ID" value="CAA78269.1"/>
    <property type="molecule type" value="mRNA"/>
</dbReference>
<dbReference type="EMBL" id="X67076">
    <property type="protein sequence ID" value="CAA47461.1"/>
    <property type="molecule type" value="mRNA"/>
</dbReference>
<dbReference type="PIR" id="S33547">
    <property type="entry name" value="A47487"/>
</dbReference>
<dbReference type="SMR" id="Q03199"/>
<dbReference type="STRING" id="4097.Q03199"/>
<dbReference type="PaxDb" id="4097-Q03199"/>
<dbReference type="Proteomes" id="UP000084051">
    <property type="component" value="Unplaced"/>
</dbReference>
<dbReference type="GO" id="GO:0005576">
    <property type="term" value="C:extracellular region"/>
    <property type="evidence" value="ECO:0007669"/>
    <property type="project" value="UniProtKB-SubCell"/>
</dbReference>
<dbReference type="GO" id="GO:0004867">
    <property type="term" value="F:serine-type endopeptidase inhibitor activity"/>
    <property type="evidence" value="ECO:0007669"/>
    <property type="project" value="UniProtKB-KW"/>
</dbReference>
<dbReference type="GO" id="GO:0009611">
    <property type="term" value="P:response to wounding"/>
    <property type="evidence" value="ECO:0007669"/>
    <property type="project" value="InterPro"/>
</dbReference>
<dbReference type="Gene3D" id="3.30.10.10">
    <property type="entry name" value="Trypsin Inhibitor V, subunit A"/>
    <property type="match status" value="1"/>
</dbReference>
<dbReference type="InterPro" id="IPR000864">
    <property type="entry name" value="Prot_inh_pot1"/>
</dbReference>
<dbReference type="InterPro" id="IPR036354">
    <property type="entry name" value="Prot_inh_pot1_sf"/>
</dbReference>
<dbReference type="PANTHER" id="PTHR33091:SF84">
    <property type="entry name" value="ETHYLENE-RESPONSIVE PROTEINASE INHIBITOR 1"/>
    <property type="match status" value="1"/>
</dbReference>
<dbReference type="PANTHER" id="PTHR33091">
    <property type="entry name" value="PROTEIN, PUTATIVE, EXPRESSED-RELATED"/>
    <property type="match status" value="1"/>
</dbReference>
<dbReference type="Pfam" id="PF00280">
    <property type="entry name" value="potato_inhibit"/>
    <property type="match status" value="1"/>
</dbReference>
<dbReference type="PRINTS" id="PR00292">
    <property type="entry name" value="POTATOINHBTR"/>
</dbReference>
<dbReference type="SUPFAM" id="SSF54654">
    <property type="entry name" value="CI-2 family of serine protease inhibitors"/>
    <property type="match status" value="1"/>
</dbReference>
<dbReference type="PROSITE" id="PS00285">
    <property type="entry name" value="POTATO_INHIBITOR"/>
    <property type="match status" value="1"/>
</dbReference>
<protein>
    <recommendedName>
        <fullName>Proteinase inhibitor I-B</fullName>
        <shortName>PI-IB</shortName>
    </recommendedName>
    <alternativeName>
        <fullName>Inhibitor of microbial serine proteinases major isoform</fullName>
    </alternativeName>
</protein>
<comment type="subcellular location">
    <subcellularLocation>
        <location evidence="3">Secreted</location>
    </subcellularLocation>
</comment>
<comment type="induction">
    <text>By tobacco mosaic virus infection, wounding, UV light, salicylic acid and ethylene.</text>
</comment>
<comment type="similarity">
    <text evidence="3">Belongs to the protease inhibitor I13 (potato type I serine protease inhibitor) family.</text>
</comment>
<evidence type="ECO:0000250" key="1"/>
<evidence type="ECO:0000255" key="2"/>
<evidence type="ECO:0000305" key="3"/>
<proteinExistence type="evidence at transcript level"/>
<name>IPIB_TOBAC</name>
<organism>
    <name type="scientific">Nicotiana tabacum</name>
    <name type="common">Common tobacco</name>
    <dbReference type="NCBI Taxonomy" id="4097"/>
    <lineage>
        <taxon>Eukaryota</taxon>
        <taxon>Viridiplantae</taxon>
        <taxon>Streptophyta</taxon>
        <taxon>Embryophyta</taxon>
        <taxon>Tracheophyta</taxon>
        <taxon>Spermatophyta</taxon>
        <taxon>Magnoliopsida</taxon>
        <taxon>eudicotyledons</taxon>
        <taxon>Gunneridae</taxon>
        <taxon>Pentapetalae</taxon>
        <taxon>asterids</taxon>
        <taxon>lamiids</taxon>
        <taxon>Solanales</taxon>
        <taxon>Solanaceae</taxon>
        <taxon>Nicotianoideae</taxon>
        <taxon>Nicotianeae</taxon>
        <taxon>Nicotiana</taxon>
    </lineage>
</organism>
<sequence length="107" mass="11916">MVKFAHVVAFLLLASLFQPLTARDLEINVLQLDVSQSGCPGVTKERWPELLGTPAKFAMQIIQKENPKLTNVQTVLNGTPVTEDLRCNRVRLFVNVLDFVVQTPQVG</sequence>
<reference key="1">
    <citation type="journal article" date="1993" name="Plant Mol. Biol.">
        <title>Tobacco proteinase inhibitor I genes are locally, but not systemically induced by stress.</title>
        <authorList>
            <person name="Linthorst H.J.M."/>
            <person name="Brederode F.T."/>
            <person name="van der Does C."/>
            <person name="Bol J.F."/>
        </authorList>
    </citation>
    <scope>NUCLEOTIDE SEQUENCE [MRNA]</scope>
</reference>
<reference key="2">
    <citation type="journal article" date="1993" name="J. Biol. Chem.">
        <title>cDNA cloning and gene expression analysis of the microbial proteinase inhibitor of tobacco.</title>
        <authorList>
            <person name="Heitz T."/>
            <person name="Geoffroy P."/>
            <person name="Stintzi A."/>
            <person name="Fritig B."/>
            <person name="Legrand M."/>
        </authorList>
    </citation>
    <scope>NUCLEOTIDE SEQUENCE [MRNA]</scope>
    <source>
        <strain>cv. Samsun NN</strain>
        <tissue>Leaf</tissue>
    </source>
</reference>
<gene>
    <name type="primary">TIMPA</name>
</gene>